<comment type="function">
    <text evidence="2">Involved in the non-oxidative decarboxylation and detoxification of phenolic derivatives under both aerobic and anaerobic conditions. Phenolic acid decarboxylase that catalyzes the reversible decarboxylation of 4-hydroxybenzoate and vanillate.</text>
</comment>
<comment type="catalytic activity">
    <reaction evidence="2">
        <text>4-hydroxybenzoate + H(+) = phenol + CO2</text>
        <dbReference type="Rhea" id="RHEA:10876"/>
        <dbReference type="ChEBI" id="CHEBI:15378"/>
        <dbReference type="ChEBI" id="CHEBI:15882"/>
        <dbReference type="ChEBI" id="CHEBI:16526"/>
        <dbReference type="ChEBI" id="CHEBI:17879"/>
        <dbReference type="EC" id="4.1.1.61"/>
    </reaction>
</comment>
<comment type="catalytic activity">
    <reaction evidence="2">
        <text>vanillate + H(+) = guaiacol + CO2</text>
        <dbReference type="Rhea" id="RHEA:51528"/>
        <dbReference type="ChEBI" id="CHEBI:15378"/>
        <dbReference type="ChEBI" id="CHEBI:16526"/>
        <dbReference type="ChEBI" id="CHEBI:16632"/>
        <dbReference type="ChEBI" id="CHEBI:28591"/>
    </reaction>
</comment>
<comment type="cofactor">
    <cofactor evidence="1">
        <name>prenylated FMN</name>
        <dbReference type="ChEBI" id="CHEBI:87746"/>
    </cofactor>
    <text evidence="1">Binds 1 prenylated FMN per subunit.</text>
</comment>
<comment type="cofactor">
    <cofactor evidence="1">
        <name>Mn(2+)</name>
        <dbReference type="ChEBI" id="CHEBI:29035"/>
    </cofactor>
</comment>
<comment type="miscellaneous">
    <text evidence="4">It is not known, if phenolic acid decarboxylase forms a complex composed of EdcB, EdcC and EdcD. The term subunit is often used in reference to the operon, however there is no experimental evidence to prove the existence of the complex.</text>
</comment>
<comment type="similarity">
    <text evidence="1">Belongs to the UbiD family. YclC subfamily.</text>
</comment>
<name>YCLC_ECO57</name>
<evidence type="ECO:0000255" key="1">
    <source>
        <dbReference type="HAMAP-Rule" id="MF_01985"/>
    </source>
</evidence>
<evidence type="ECO:0000269" key="2">
    <source>
    </source>
</evidence>
<evidence type="ECO:0000303" key="3">
    <source>
    </source>
</evidence>
<evidence type="ECO:0000305" key="4"/>
<reference key="1">
    <citation type="journal article" date="2001" name="DNA Res.">
        <title>Complete genome sequence of enterohemorrhagic Escherichia coli O157:H7 and genomic comparison with a laboratory strain K-12.</title>
        <authorList>
            <person name="Hayashi T."/>
            <person name="Makino K."/>
            <person name="Ohnishi M."/>
            <person name="Kurokawa K."/>
            <person name="Ishii K."/>
            <person name="Yokoyama K."/>
            <person name="Han C.-G."/>
            <person name="Ohtsubo E."/>
            <person name="Nakayama K."/>
            <person name="Murata T."/>
            <person name="Tanaka M."/>
            <person name="Tobe T."/>
            <person name="Iida T."/>
            <person name="Takami H."/>
            <person name="Honda T."/>
            <person name="Sasakawa C."/>
            <person name="Ogasawara N."/>
            <person name="Yasunaga T."/>
            <person name="Kuhara S."/>
            <person name="Shiba T."/>
            <person name="Hattori M."/>
            <person name="Shinagawa H."/>
        </authorList>
    </citation>
    <scope>NUCLEOTIDE SEQUENCE [LARGE SCALE GENOMIC DNA]</scope>
    <source>
        <strain>O157:H7 / Sakai / RIMD 0509952 / EHEC</strain>
    </source>
</reference>
<reference key="2">
    <citation type="journal article" date="2001" name="Nature">
        <title>Genome sequence of enterohaemorrhagic Escherichia coli O157:H7.</title>
        <authorList>
            <person name="Perna N.T."/>
            <person name="Plunkett G. III"/>
            <person name="Burland V."/>
            <person name="Mau B."/>
            <person name="Glasner J.D."/>
            <person name="Rose D.J."/>
            <person name="Mayhew G.F."/>
            <person name="Evans P.S."/>
            <person name="Gregor J."/>
            <person name="Kirkpatrick H.A."/>
            <person name="Posfai G."/>
            <person name="Hackett J."/>
            <person name="Klink S."/>
            <person name="Boutin A."/>
            <person name="Shao Y."/>
            <person name="Miller L."/>
            <person name="Grotbeck E.J."/>
            <person name="Davis N.W."/>
            <person name="Lim A."/>
            <person name="Dimalanta E.T."/>
            <person name="Potamousis K."/>
            <person name="Apodaca J."/>
            <person name="Anantharaman T.S."/>
            <person name="Lin J."/>
            <person name="Yen G."/>
            <person name="Schwartz D.C."/>
            <person name="Welch R.A."/>
            <person name="Blattner F.R."/>
        </authorList>
    </citation>
    <scope>NUCLEOTIDE SEQUENCE [LARGE SCALE GENOMIC DNA]</scope>
    <source>
        <strain>O157:H7 / EDL933 / ATCC 700927 / EHEC</strain>
    </source>
</reference>
<reference key="3">
    <citation type="journal article" date="2005" name="Genomics">
        <title>Distribution of genes encoding the microbial non-oxidative reversible hydroxyarylic acid decarboxylases/phenol carboxylases.</title>
        <authorList>
            <person name="Lupa B."/>
            <person name="Lyon D."/>
            <person name="Gibbs M.D."/>
            <person name="Reeves R.A."/>
            <person name="Wiegel J."/>
        </authorList>
    </citation>
    <scope>FUNCTION</scope>
    <scope>CATALYTIC ACTIVITY</scope>
    <scope>SUBSTRATE SPECIFICITY</scope>
    <source>
        <strain>O157:H7 / EDL933 / ATCC 700927 / EHEC</strain>
    </source>
</reference>
<protein>
    <recommendedName>
        <fullName evidence="1 3">Phenolic acid decarboxylase</fullName>
        <shortName evidence="1 3">PAD</shortName>
    </recommendedName>
    <alternativeName>
        <fullName evidence="3">4-hydroxybenzoate decarboxylase</fullName>
        <shortName evidence="3">4-hydroxybenzoate DC</shortName>
        <ecNumber evidence="2">4.1.1.61</ecNumber>
    </alternativeName>
    <alternativeName>
        <fullName evidence="3">Phenolic acid decarboxylase subunit C</fullName>
    </alternativeName>
    <alternativeName>
        <fullName evidence="3">Vanillate decarboxylase</fullName>
        <shortName evidence="3">Vanillate DC</shortName>
        <ecNumber evidence="2">4.1.1.-</ecNumber>
    </alternativeName>
</protein>
<feature type="chain" id="PRO_0000434527" description="Phenolic acid decarboxylase">
    <location>
        <begin position="1"/>
        <end position="475"/>
    </location>
</feature>
<feature type="active site" description="Proton donor" evidence="1">
    <location>
        <position position="274"/>
    </location>
</feature>
<feature type="binding site" evidence="1">
    <location>
        <begin position="161"/>
        <end position="166"/>
    </location>
    <ligand>
        <name>prenylated FMN</name>
        <dbReference type="ChEBI" id="CHEBI:87746"/>
    </ligand>
</feature>
<feature type="binding site" evidence="1">
    <location>
        <position position="161"/>
    </location>
    <ligand>
        <name>Mn(2+)</name>
        <dbReference type="ChEBI" id="CHEBI:29035"/>
    </ligand>
</feature>
<feature type="binding site" evidence="1">
    <location>
        <begin position="182"/>
        <end position="183"/>
    </location>
    <ligand>
        <name>prenylated FMN</name>
        <dbReference type="ChEBI" id="CHEBI:87746"/>
    </ligand>
</feature>
<feature type="binding site" evidence="1">
    <location>
        <position position="183"/>
    </location>
    <ligand>
        <name>Mn(2+)</name>
        <dbReference type="ChEBI" id="CHEBI:29035"/>
    </ligand>
</feature>
<feature type="binding site" evidence="1">
    <location>
        <position position="225"/>
    </location>
    <ligand>
        <name>Mn(2+)</name>
        <dbReference type="ChEBI" id="CHEBI:29035"/>
    </ligand>
</feature>
<proteinExistence type="evidence at protein level"/>
<sequence>MAFDDLRSFLQALDDHGQLLKISEEVNAEPDLAAAANATGRIGDGAPALWFDNIRGFTDARVAMNTIGSWQNHAISLGLPPNTPVKKQIDEFIRRWDNFPIAPERRANPAWAQNTVDGDEINLFDILPLFRLNDGDGGFYLDKACVVSRDPLDPDNFGKQNVGIYRMEVKGKRKLGLQPVPMHDIALHLHKAEERGEDLPIAITLGNDPIITLMGATPLKYDQSEYEMAGALRESPYPIATAPLTGFDVPWGSEVILEGVIESRKREIEGPFGEFTGHYSGGRNMTVVRIDKVSYRTRPIFESLYLGMPWTEIDYLMGPATCVPLYQQLKAEFPEVQAVNAMYTHGLLAIISTKKRYGGFARAVGLRAMTTPHGLGYVKMVIMVDEDVDPFNLPQVMWALSSKVNPAGDLVQLPNMSVLELDPGSSPAGITDKLIIDATTPVAPDNRGHYSQPVVDLPETKAWAEKLTAMLAARK</sequence>
<dbReference type="EC" id="4.1.1.61" evidence="2"/>
<dbReference type="EC" id="4.1.1.-" evidence="2"/>
<dbReference type="EMBL" id="AE005174">
    <property type="protein sequence ID" value="AAG57845.1"/>
    <property type="molecule type" value="Genomic_DNA"/>
</dbReference>
<dbReference type="EMBL" id="BA000007">
    <property type="protein sequence ID" value="BAB37015.1"/>
    <property type="molecule type" value="Genomic_DNA"/>
</dbReference>
<dbReference type="RefSeq" id="WP_000863205.1">
    <property type="nucleotide sequence ID" value="NZ_VOAI01000003.1"/>
</dbReference>
<dbReference type="SMR" id="Q7DBA7"/>
<dbReference type="STRING" id="155864.Z4046"/>
<dbReference type="KEGG" id="ece:Z4046"/>
<dbReference type="KEGG" id="ecs:ECs_3592"/>
<dbReference type="PATRIC" id="fig|386585.9.peg.3755"/>
<dbReference type="eggNOG" id="COG0043">
    <property type="taxonomic scope" value="Bacteria"/>
</dbReference>
<dbReference type="HOGENOM" id="CLU_023348_3_2_6"/>
<dbReference type="OMA" id="NPPWAEN"/>
<dbReference type="Proteomes" id="UP000000558">
    <property type="component" value="Chromosome"/>
</dbReference>
<dbReference type="Proteomes" id="UP000002519">
    <property type="component" value="Chromosome"/>
</dbReference>
<dbReference type="GO" id="GO:0005829">
    <property type="term" value="C:cytosol"/>
    <property type="evidence" value="ECO:0007669"/>
    <property type="project" value="TreeGrafter"/>
</dbReference>
<dbReference type="GO" id="GO:0008694">
    <property type="term" value="F:3-octaprenyl-4-hydroxybenzoate carboxy-lyase activity"/>
    <property type="evidence" value="ECO:0007669"/>
    <property type="project" value="TreeGrafter"/>
</dbReference>
<dbReference type="GO" id="GO:0018799">
    <property type="term" value="F:4-hydroxybenzoate decarboxylase activity"/>
    <property type="evidence" value="ECO:0007669"/>
    <property type="project" value="UniProtKB-EC"/>
</dbReference>
<dbReference type="GO" id="GO:0046872">
    <property type="term" value="F:metal ion binding"/>
    <property type="evidence" value="ECO:0007669"/>
    <property type="project" value="UniProtKB-KW"/>
</dbReference>
<dbReference type="GO" id="GO:0009056">
    <property type="term" value="P:catabolic process"/>
    <property type="evidence" value="ECO:0007669"/>
    <property type="project" value="UniProtKB-KW"/>
</dbReference>
<dbReference type="GO" id="GO:0009636">
    <property type="term" value="P:response to toxic substance"/>
    <property type="evidence" value="ECO:0007669"/>
    <property type="project" value="UniProtKB-KW"/>
</dbReference>
<dbReference type="GO" id="GO:0006744">
    <property type="term" value="P:ubiquinone biosynthetic process"/>
    <property type="evidence" value="ECO:0007669"/>
    <property type="project" value="TreeGrafter"/>
</dbReference>
<dbReference type="FunFam" id="3.40.1670.10:FF:000003">
    <property type="entry name" value="Phenolic acid decarboxylase"/>
    <property type="match status" value="1"/>
</dbReference>
<dbReference type="Gene3D" id="3.40.1670.10">
    <property type="entry name" value="UbiD C-terminal domain-like"/>
    <property type="match status" value="1"/>
</dbReference>
<dbReference type="HAMAP" id="MF_01985">
    <property type="entry name" value="UbiD_YclC"/>
    <property type="match status" value="1"/>
</dbReference>
<dbReference type="InterPro" id="IPR032902">
    <property type="entry name" value="BsdC"/>
</dbReference>
<dbReference type="InterPro" id="IPR053417">
    <property type="entry name" value="PAD_UbiD-like"/>
</dbReference>
<dbReference type="InterPro" id="IPR002830">
    <property type="entry name" value="UbiD"/>
</dbReference>
<dbReference type="InterPro" id="IPR049381">
    <property type="entry name" value="UbiD-like_C"/>
</dbReference>
<dbReference type="InterPro" id="IPR049383">
    <property type="entry name" value="UbiD-like_N"/>
</dbReference>
<dbReference type="InterPro" id="IPR048304">
    <property type="entry name" value="UbiD_Rift_dom"/>
</dbReference>
<dbReference type="NCBIfam" id="TIGR00148">
    <property type="entry name" value="UbiD family decarboxylase"/>
    <property type="match status" value="1"/>
</dbReference>
<dbReference type="NCBIfam" id="NF041204">
    <property type="entry name" value="VdcC"/>
    <property type="match status" value="1"/>
</dbReference>
<dbReference type="PANTHER" id="PTHR30108">
    <property type="entry name" value="3-OCTAPRENYL-4-HYDROXYBENZOATE CARBOXY-LYASE-RELATED"/>
    <property type="match status" value="1"/>
</dbReference>
<dbReference type="PANTHER" id="PTHR30108:SF17">
    <property type="entry name" value="FERULIC ACID DECARBOXYLASE 1"/>
    <property type="match status" value="1"/>
</dbReference>
<dbReference type="Pfam" id="PF01977">
    <property type="entry name" value="UbiD"/>
    <property type="match status" value="1"/>
</dbReference>
<dbReference type="Pfam" id="PF20696">
    <property type="entry name" value="UbiD_C"/>
    <property type="match status" value="1"/>
</dbReference>
<dbReference type="Pfam" id="PF20695">
    <property type="entry name" value="UbiD_N"/>
    <property type="match status" value="1"/>
</dbReference>
<dbReference type="SUPFAM" id="SSF50475">
    <property type="entry name" value="FMN-binding split barrel"/>
    <property type="match status" value="1"/>
</dbReference>
<dbReference type="SUPFAM" id="SSF143968">
    <property type="entry name" value="UbiD C-terminal domain-like"/>
    <property type="match status" value="1"/>
</dbReference>
<organism>
    <name type="scientific">Escherichia coli O157:H7</name>
    <dbReference type="NCBI Taxonomy" id="83334"/>
    <lineage>
        <taxon>Bacteria</taxon>
        <taxon>Pseudomonadati</taxon>
        <taxon>Pseudomonadota</taxon>
        <taxon>Gammaproteobacteria</taxon>
        <taxon>Enterobacterales</taxon>
        <taxon>Enterobacteriaceae</taxon>
        <taxon>Escherichia</taxon>
    </lineage>
</organism>
<gene>
    <name evidence="3" type="primary">edcC</name>
    <name type="synonym">yclC</name>
    <name type="ordered locus">ECs3592</name>
    <name type="ordered locus">Z4046</name>
</gene>
<keyword id="KW-0058">Aromatic hydrocarbons catabolism</keyword>
<keyword id="KW-0210">Decarboxylase</keyword>
<keyword id="KW-0216">Detoxification</keyword>
<keyword id="KW-0285">Flavoprotein</keyword>
<keyword id="KW-0288">FMN</keyword>
<keyword id="KW-0456">Lyase</keyword>
<keyword id="KW-0464">Manganese</keyword>
<keyword id="KW-0479">Metal-binding</keyword>
<keyword id="KW-1185">Reference proteome</keyword>
<accession>Q7DBA7</accession>
<accession>Q7ABA7</accession>